<keyword id="KW-0050">Antiport</keyword>
<keyword id="KW-0997">Cell inner membrane</keyword>
<keyword id="KW-1003">Cell membrane</keyword>
<keyword id="KW-0406">Ion transport</keyword>
<keyword id="KW-0472">Membrane</keyword>
<keyword id="KW-1185">Reference proteome</keyword>
<keyword id="KW-0915">Sodium</keyword>
<keyword id="KW-0739">Sodium transport</keyword>
<keyword id="KW-0812">Transmembrane</keyword>
<keyword id="KW-1133">Transmembrane helix</keyword>
<keyword id="KW-0813">Transport</keyword>
<reference key="1">
    <citation type="journal article" date="2009" name="J. Bacteriol.">
        <title>Complete genome sequence of Erythrobacter litoralis HTCC2594.</title>
        <authorList>
            <person name="Oh H.M."/>
            <person name="Giovannoni S.J."/>
            <person name="Ferriera S."/>
            <person name="Johnson J."/>
            <person name="Cho J.C."/>
        </authorList>
    </citation>
    <scope>NUCLEOTIDE SEQUENCE [LARGE SCALE GENOMIC DNA]</scope>
    <source>
        <strain>HTCC2594</strain>
    </source>
</reference>
<name>NHAA1_ERYLH</name>
<feature type="chain" id="PRO_0000334282" description="Na(+)/H(+) antiporter NhaA 1">
    <location>
        <begin position="1"/>
        <end position="405"/>
    </location>
</feature>
<feature type="transmembrane region" description="Helical" evidence="1">
    <location>
        <begin position="20"/>
        <end position="40"/>
    </location>
</feature>
<feature type="transmembrane region" description="Helical" evidence="1">
    <location>
        <begin position="68"/>
        <end position="88"/>
    </location>
</feature>
<feature type="transmembrane region" description="Helical" evidence="1">
    <location>
        <begin position="105"/>
        <end position="125"/>
    </location>
</feature>
<feature type="transmembrane region" description="Helical" evidence="1">
    <location>
        <begin position="134"/>
        <end position="154"/>
    </location>
</feature>
<feature type="transmembrane region" description="Helical" evidence="1">
    <location>
        <begin position="163"/>
        <end position="183"/>
    </location>
</feature>
<feature type="transmembrane region" description="Helical" evidence="1">
    <location>
        <begin position="186"/>
        <end position="206"/>
    </location>
</feature>
<feature type="transmembrane region" description="Helical" evidence="1">
    <location>
        <begin position="214"/>
        <end position="234"/>
    </location>
</feature>
<feature type="transmembrane region" description="Helical" evidence="1">
    <location>
        <begin position="263"/>
        <end position="283"/>
    </location>
</feature>
<feature type="transmembrane region" description="Helical" evidence="1">
    <location>
        <begin position="301"/>
        <end position="321"/>
    </location>
</feature>
<feature type="transmembrane region" description="Helical" evidence="1">
    <location>
        <begin position="334"/>
        <end position="354"/>
    </location>
</feature>
<feature type="transmembrane region" description="Helical" evidence="1">
    <location>
        <begin position="371"/>
        <end position="391"/>
    </location>
</feature>
<dbReference type="EMBL" id="CP000157">
    <property type="protein sequence ID" value="ABC62340.1"/>
    <property type="molecule type" value="Genomic_DNA"/>
</dbReference>
<dbReference type="RefSeq" id="WP_011413216.1">
    <property type="nucleotide sequence ID" value="NC_007722.1"/>
</dbReference>
<dbReference type="SMR" id="Q2NDA1"/>
<dbReference type="STRING" id="314225.ELI_01240"/>
<dbReference type="KEGG" id="eli:ELI_01240"/>
<dbReference type="eggNOG" id="COG3004">
    <property type="taxonomic scope" value="Bacteria"/>
</dbReference>
<dbReference type="HOGENOM" id="CLU_015803_1_2_5"/>
<dbReference type="OrthoDB" id="9808135at2"/>
<dbReference type="Proteomes" id="UP000008808">
    <property type="component" value="Chromosome"/>
</dbReference>
<dbReference type="GO" id="GO:0005886">
    <property type="term" value="C:plasma membrane"/>
    <property type="evidence" value="ECO:0007669"/>
    <property type="project" value="UniProtKB-SubCell"/>
</dbReference>
<dbReference type="GO" id="GO:0015385">
    <property type="term" value="F:sodium:proton antiporter activity"/>
    <property type="evidence" value="ECO:0007669"/>
    <property type="project" value="TreeGrafter"/>
</dbReference>
<dbReference type="GO" id="GO:0006885">
    <property type="term" value="P:regulation of pH"/>
    <property type="evidence" value="ECO:0007669"/>
    <property type="project" value="InterPro"/>
</dbReference>
<dbReference type="Gene3D" id="1.20.1530.10">
    <property type="entry name" value="Na+/H+ antiporter like domain"/>
    <property type="match status" value="1"/>
</dbReference>
<dbReference type="HAMAP" id="MF_01844">
    <property type="entry name" value="NhaA"/>
    <property type="match status" value="1"/>
</dbReference>
<dbReference type="InterPro" id="IPR023171">
    <property type="entry name" value="Na/H_antiporter_dom_sf"/>
</dbReference>
<dbReference type="InterPro" id="IPR004670">
    <property type="entry name" value="NhaA"/>
</dbReference>
<dbReference type="NCBIfam" id="TIGR00773">
    <property type="entry name" value="NhaA"/>
    <property type="match status" value="1"/>
</dbReference>
<dbReference type="NCBIfam" id="NF007111">
    <property type="entry name" value="PRK09560.1"/>
    <property type="match status" value="1"/>
</dbReference>
<dbReference type="NCBIfam" id="NF007112">
    <property type="entry name" value="PRK09561.1"/>
    <property type="match status" value="1"/>
</dbReference>
<dbReference type="PANTHER" id="PTHR30341:SF0">
    <property type="entry name" value="NA(+)_H(+) ANTIPORTER NHAA"/>
    <property type="match status" value="1"/>
</dbReference>
<dbReference type="PANTHER" id="PTHR30341">
    <property type="entry name" value="SODIUM ION/PROTON ANTIPORTER NHAA-RELATED"/>
    <property type="match status" value="1"/>
</dbReference>
<dbReference type="Pfam" id="PF06965">
    <property type="entry name" value="Na_H_antiport_1"/>
    <property type="match status" value="1"/>
</dbReference>
<evidence type="ECO:0000255" key="1">
    <source>
        <dbReference type="HAMAP-Rule" id="MF_01844"/>
    </source>
</evidence>
<gene>
    <name evidence="1" type="primary">nhaA1</name>
    <name type="ordered locus">ELI_01240</name>
</gene>
<proteinExistence type="inferred from homology"/>
<organism>
    <name type="scientific">Erythrobacter litoralis (strain HTCC2594)</name>
    <dbReference type="NCBI Taxonomy" id="314225"/>
    <lineage>
        <taxon>Bacteria</taxon>
        <taxon>Pseudomonadati</taxon>
        <taxon>Pseudomonadota</taxon>
        <taxon>Alphaproteobacteria</taxon>
        <taxon>Sphingomonadales</taxon>
        <taxon>Erythrobacteraceae</taxon>
        <taxon>Erythrobacter/Porphyrobacter group</taxon>
        <taxon>Erythrobacter</taxon>
    </lineage>
</organism>
<comment type="function">
    <text evidence="1">Na(+)/H(+) antiporter that extrudes sodium in exchange for external protons.</text>
</comment>
<comment type="catalytic activity">
    <reaction evidence="1">
        <text>Na(+)(in) + 2 H(+)(out) = Na(+)(out) + 2 H(+)(in)</text>
        <dbReference type="Rhea" id="RHEA:29251"/>
        <dbReference type="ChEBI" id="CHEBI:15378"/>
        <dbReference type="ChEBI" id="CHEBI:29101"/>
    </reaction>
    <physiologicalReaction direction="left-to-right" evidence="1">
        <dbReference type="Rhea" id="RHEA:29252"/>
    </physiologicalReaction>
</comment>
<comment type="subcellular location">
    <subcellularLocation>
        <location evidence="1">Cell inner membrane</location>
        <topology evidence="1">Multi-pass membrane protein</topology>
    </subcellularLocation>
</comment>
<comment type="similarity">
    <text evidence="1">Belongs to the NhaA Na(+)/H(+) (TC 2.A.33) antiporter family.</text>
</comment>
<protein>
    <recommendedName>
        <fullName evidence="1">Na(+)/H(+) antiporter NhaA 1</fullName>
    </recommendedName>
    <alternativeName>
        <fullName evidence="1">Sodium/proton antiporter NhaA 1</fullName>
    </alternativeName>
</protein>
<sequence length="405" mass="42597">MVDPIRSPLSRAFAPVRALFVSDASAGILLILVAAAAMIVANSPLAGAYEEMFYGDLAWTPIAKLDDLHLWINDGLMAIFFFVVGLEVKRELICGQLSSPEQRTLPVLAAIAGMAVPAIVYVGVVGTDSALVRGWAIPAATDIAFAMGVLGLLGSRVPASLRLFLLTVAIVDDIGAVLVIAAFYTANLKVMWLVIALGIFGVMVGMNKFGVDRIWPYILVALVLWVAVLFSGVHATIAGVMAALTIPMRRKDGHSLLEKLEHGLAPWSAYLVVPIFGFANAGVNLSGMGLDAVLAPLPLAIAAGLVVGKQLGIFGIIVAAVKLGIAKAPANANWIEIWGVSILTGIGFTMSLFISGLAFTDSRLLIDEAKIGILGGSLISAILGYTILRLTTTHPEERPPQTVTP</sequence>
<accession>Q2NDA1</accession>